<gene>
    <name type="primary">MT-ND4</name>
    <name type="synonym">MTND4</name>
    <name type="synonym">NADH4</name>
    <name type="synonym">ND4</name>
</gene>
<name>NU4M_PANTR</name>
<reference key="1">
    <citation type="journal article" date="1995" name="Proc. Natl. Acad. Sci. U.S.A.">
        <title>Recent African origin of modern humans revealed by complete sequences of hominoid mitochondrial DNAs.</title>
        <authorList>
            <person name="Horai S."/>
            <person name="Hayasaka K."/>
            <person name="Kondo R."/>
            <person name="Tsugane K."/>
            <person name="Takahata N."/>
        </authorList>
    </citation>
    <scope>NUCLEOTIDE SEQUENCE [GENOMIC DNA]</scope>
</reference>
<reference key="2">
    <citation type="journal article" date="1982" name="J. Mol. Evol.">
        <title>Mitochondrial DNA sequences of primates: tempo and mode of evolution.</title>
        <authorList>
            <person name="Brown W.M."/>
            <person name="Prager E.M."/>
            <person name="Wang A."/>
            <person name="Wilson A.C."/>
        </authorList>
    </citation>
    <scope>NUCLEOTIDE SEQUENCE [GENOMIC DNA] OF 308-459</scope>
</reference>
<protein>
    <recommendedName>
        <fullName>NADH-ubiquinone oxidoreductase chain 4</fullName>
        <ecNumber evidence="1">7.1.1.2</ecNumber>
    </recommendedName>
    <alternativeName>
        <fullName>NADH dehydrogenase subunit 4</fullName>
    </alternativeName>
</protein>
<sequence length="459" mass="51648">MLKLIIPTIMLLPLTWFSKKRMIWINTTTHSLIISTIPLLFFNQINNNLFSCSLPFSSDPLTTPLLMLTAWLLPLTIMASQRHLSNEPLSRKKLYLSMLISLQISLIMTFSATELIMFYIFFETTLIPTLAIITRWGNQPERLNAGTYFLFYTLVGSLPLLIALIYTHNTLGSLNILLLTLTTQELSNTWANNLMWLAYTMAFMVKMPLYGLHLWLPKAHVEAPIAGSMVLAAVLLKLGGYGMMRLTLILNPLTKHMAYPFLMLSLWGMIMTSSICLRQTDLKSLIAYPSVSHMALVVTAILIQTPWSFTGAIILMIAHGLTSSLLSCLANSNYERTHSRIMILSQGLQTLLPLMAFWWLLASLANLALPPTINLLGELSVLVTSFSWSNTTLLLTGFNMLITALYSLYMFTTTQWGSLTHHINSMKPSFTRENTLMFLHLSPILLLSLNPDIITGFTS</sequence>
<dbReference type="EC" id="7.1.1.2" evidence="1"/>
<dbReference type="EMBL" id="D38113">
    <property type="protein sequence ID" value="BAA85274.1"/>
    <property type="molecule type" value="Genomic_DNA"/>
</dbReference>
<dbReference type="EMBL" id="V00672">
    <property type="protein sequence ID" value="CAB51801.1"/>
    <property type="status" value="ALT_TERM"/>
    <property type="molecule type" value="Genomic_DNA"/>
</dbReference>
<dbReference type="PIR" id="A00435">
    <property type="entry name" value="A00435"/>
</dbReference>
<dbReference type="RefSeq" id="NP_008195.1">
    <property type="nucleotide sequence ID" value="NC_001643.1"/>
</dbReference>
<dbReference type="SMR" id="P03906"/>
<dbReference type="FunCoup" id="P03906">
    <property type="interactions" value="269"/>
</dbReference>
<dbReference type="STRING" id="9598.ENSPTRP00000061398"/>
<dbReference type="PaxDb" id="9598-ENSPTRP00000061398"/>
<dbReference type="Ensembl" id="ENSPTRT00000076403.1">
    <property type="protein sequence ID" value="ENSPTRP00000061398.1"/>
    <property type="gene ID" value="ENSPTRG00000042639.1"/>
</dbReference>
<dbReference type="GeneID" id="807863"/>
<dbReference type="KEGG" id="ptr:807863"/>
<dbReference type="CTD" id="4538"/>
<dbReference type="VGNC" id="VGNC:11721">
    <property type="gene designation" value="MT-ND4"/>
</dbReference>
<dbReference type="eggNOG" id="KOG4845">
    <property type="taxonomic scope" value="Eukaryota"/>
</dbReference>
<dbReference type="GeneTree" id="ENSGT00730000111316"/>
<dbReference type="HOGENOM" id="CLU_007100_4_0_1"/>
<dbReference type="InParanoid" id="P03906"/>
<dbReference type="OMA" id="ITRWGNQ"/>
<dbReference type="Proteomes" id="UP000002277">
    <property type="component" value="Mitochondrion"/>
</dbReference>
<dbReference type="Bgee" id="ENSPTRG00000042639">
    <property type="expression patterns" value="Expressed in cortex of kidney and 21 other cell types or tissues"/>
</dbReference>
<dbReference type="GO" id="GO:0005743">
    <property type="term" value="C:mitochondrial inner membrane"/>
    <property type="evidence" value="ECO:0000250"/>
    <property type="project" value="UniProtKB"/>
</dbReference>
<dbReference type="GO" id="GO:0045271">
    <property type="term" value="C:respiratory chain complex I"/>
    <property type="evidence" value="ECO:0000318"/>
    <property type="project" value="GO_Central"/>
</dbReference>
<dbReference type="GO" id="GO:0008137">
    <property type="term" value="F:NADH dehydrogenase (ubiquinone) activity"/>
    <property type="evidence" value="ECO:0000250"/>
    <property type="project" value="UniProtKB"/>
</dbReference>
<dbReference type="GO" id="GO:0048039">
    <property type="term" value="F:ubiquinone binding"/>
    <property type="evidence" value="ECO:0000318"/>
    <property type="project" value="GO_Central"/>
</dbReference>
<dbReference type="GO" id="GO:0009060">
    <property type="term" value="P:aerobic respiration"/>
    <property type="evidence" value="ECO:0000318"/>
    <property type="project" value="GO_Central"/>
</dbReference>
<dbReference type="GO" id="GO:0015990">
    <property type="term" value="P:electron transport coupled proton transport"/>
    <property type="evidence" value="ECO:0000318"/>
    <property type="project" value="GO_Central"/>
</dbReference>
<dbReference type="GO" id="GO:0006120">
    <property type="term" value="P:mitochondrial electron transport, NADH to ubiquinone"/>
    <property type="evidence" value="ECO:0000250"/>
    <property type="project" value="UniProtKB"/>
</dbReference>
<dbReference type="GO" id="GO:0032981">
    <property type="term" value="P:mitochondrial respiratory chain complex I assembly"/>
    <property type="evidence" value="ECO:0000250"/>
    <property type="project" value="UniProtKB"/>
</dbReference>
<dbReference type="InterPro" id="IPR000260">
    <property type="entry name" value="NADH4_N"/>
</dbReference>
<dbReference type="InterPro" id="IPR010227">
    <property type="entry name" value="NADH_Q_OxRdtase_chainM/4"/>
</dbReference>
<dbReference type="InterPro" id="IPR003918">
    <property type="entry name" value="NADH_UbQ_OxRdtase"/>
</dbReference>
<dbReference type="InterPro" id="IPR001750">
    <property type="entry name" value="ND/Mrp_TM"/>
</dbReference>
<dbReference type="NCBIfam" id="TIGR01972">
    <property type="entry name" value="NDH_I_M"/>
    <property type="match status" value="1"/>
</dbReference>
<dbReference type="PANTHER" id="PTHR43507">
    <property type="entry name" value="NADH-UBIQUINONE OXIDOREDUCTASE CHAIN 4"/>
    <property type="match status" value="1"/>
</dbReference>
<dbReference type="PANTHER" id="PTHR43507:SF20">
    <property type="entry name" value="NADH-UBIQUINONE OXIDOREDUCTASE CHAIN 4"/>
    <property type="match status" value="1"/>
</dbReference>
<dbReference type="Pfam" id="PF01059">
    <property type="entry name" value="Oxidored_q5_N"/>
    <property type="match status" value="1"/>
</dbReference>
<dbReference type="Pfam" id="PF00361">
    <property type="entry name" value="Proton_antipo_M"/>
    <property type="match status" value="1"/>
</dbReference>
<dbReference type="PRINTS" id="PR01437">
    <property type="entry name" value="NUOXDRDTASE4"/>
</dbReference>
<proteinExistence type="inferred from homology"/>
<geneLocation type="mitochondrion"/>
<accession>P03906</accession>
<accession>Q9T9V7</accession>
<feature type="chain" id="PRO_0000117963" description="NADH-ubiquinone oxidoreductase chain 4">
    <location>
        <begin position="1"/>
        <end position="459"/>
    </location>
</feature>
<feature type="transmembrane region" description="Helical" evidence="3">
    <location>
        <begin position="22"/>
        <end position="42"/>
    </location>
</feature>
<feature type="transmembrane region" description="Helical" evidence="3">
    <location>
        <begin position="60"/>
        <end position="80"/>
    </location>
</feature>
<feature type="transmembrane region" description="Helical" evidence="3">
    <location>
        <begin position="94"/>
        <end position="112"/>
    </location>
</feature>
<feature type="transmembrane region" description="Helical" evidence="3">
    <location>
        <begin position="113"/>
        <end position="133"/>
    </location>
</feature>
<feature type="transmembrane region" description="Helical" evidence="3">
    <location>
        <begin position="145"/>
        <end position="165"/>
    </location>
</feature>
<feature type="transmembrane region" description="Helical" evidence="3">
    <location>
        <begin position="196"/>
        <end position="216"/>
    </location>
</feature>
<feature type="transmembrane region" description="Helical" evidence="3">
    <location>
        <begin position="224"/>
        <end position="244"/>
    </location>
</feature>
<feature type="transmembrane region" description="Helical" evidence="3">
    <location>
        <begin position="257"/>
        <end position="277"/>
    </location>
</feature>
<feature type="transmembrane region" description="Helical" evidence="3">
    <location>
        <begin position="284"/>
        <end position="303"/>
    </location>
</feature>
<feature type="transmembrane region" description="Helical" evidence="3">
    <location>
        <begin position="308"/>
        <end position="330"/>
    </location>
</feature>
<feature type="transmembrane region" description="Helical" evidence="3">
    <location>
        <begin position="351"/>
        <end position="371"/>
    </location>
</feature>
<feature type="transmembrane region" description="Helical" evidence="3">
    <location>
        <begin position="391"/>
        <end position="411"/>
    </location>
</feature>
<feature type="sequence conflict" description="In Ref. 2; CAB51801." evidence="4" ref="2">
    <original>S</original>
    <variation>F</variation>
    <location>
        <position position="327"/>
    </location>
</feature>
<feature type="sequence conflict" description="In Ref. 2; CAB51801." evidence="4" ref="2">
    <original>S</original>
    <variation>N</variation>
    <location>
        <position position="425"/>
    </location>
</feature>
<organism>
    <name type="scientific">Pan troglodytes</name>
    <name type="common">Chimpanzee</name>
    <dbReference type="NCBI Taxonomy" id="9598"/>
    <lineage>
        <taxon>Eukaryota</taxon>
        <taxon>Metazoa</taxon>
        <taxon>Chordata</taxon>
        <taxon>Craniata</taxon>
        <taxon>Vertebrata</taxon>
        <taxon>Euteleostomi</taxon>
        <taxon>Mammalia</taxon>
        <taxon>Eutheria</taxon>
        <taxon>Euarchontoglires</taxon>
        <taxon>Primates</taxon>
        <taxon>Haplorrhini</taxon>
        <taxon>Catarrhini</taxon>
        <taxon>Hominidae</taxon>
        <taxon>Pan</taxon>
    </lineage>
</organism>
<comment type="function">
    <text evidence="1">Core subunit of the mitochondrial membrane respiratory chain NADH dehydrogenase (Complex I) which catalyzes electron transfer from NADH through the respiratory chain, using ubiquinone as an electron acceptor. Essential for the catalytic activity and assembly of complex I.</text>
</comment>
<comment type="catalytic activity">
    <reaction evidence="1">
        <text>a ubiquinone + NADH + 5 H(+)(in) = a ubiquinol + NAD(+) + 4 H(+)(out)</text>
        <dbReference type="Rhea" id="RHEA:29091"/>
        <dbReference type="Rhea" id="RHEA-COMP:9565"/>
        <dbReference type="Rhea" id="RHEA-COMP:9566"/>
        <dbReference type="ChEBI" id="CHEBI:15378"/>
        <dbReference type="ChEBI" id="CHEBI:16389"/>
        <dbReference type="ChEBI" id="CHEBI:17976"/>
        <dbReference type="ChEBI" id="CHEBI:57540"/>
        <dbReference type="ChEBI" id="CHEBI:57945"/>
        <dbReference type="EC" id="7.1.1.2"/>
    </reaction>
</comment>
<comment type="subunit">
    <text evidence="2">Core subunit of respiratory chain NADH dehydrogenase (Complex I) which is composed of 45 different subunits.</text>
</comment>
<comment type="subcellular location">
    <subcellularLocation>
        <location evidence="2">Mitochondrion inner membrane</location>
        <topology evidence="3">Multi-pass membrane protein</topology>
    </subcellularLocation>
</comment>
<comment type="similarity">
    <text evidence="4">Belongs to the complex I subunit 4 family.</text>
</comment>
<keyword id="KW-0249">Electron transport</keyword>
<keyword id="KW-0472">Membrane</keyword>
<keyword id="KW-0496">Mitochondrion</keyword>
<keyword id="KW-0999">Mitochondrion inner membrane</keyword>
<keyword id="KW-0520">NAD</keyword>
<keyword id="KW-1185">Reference proteome</keyword>
<keyword id="KW-0679">Respiratory chain</keyword>
<keyword id="KW-1278">Translocase</keyword>
<keyword id="KW-0812">Transmembrane</keyword>
<keyword id="KW-1133">Transmembrane helix</keyword>
<keyword id="KW-0813">Transport</keyword>
<keyword id="KW-0830">Ubiquinone</keyword>
<evidence type="ECO:0000250" key="1">
    <source>
        <dbReference type="UniProtKB" id="P03905"/>
    </source>
</evidence>
<evidence type="ECO:0000250" key="2">
    <source>
        <dbReference type="UniProtKB" id="P03910"/>
    </source>
</evidence>
<evidence type="ECO:0000255" key="3"/>
<evidence type="ECO:0000305" key="4"/>